<comment type="function">
    <text evidence="1">Catalyzes the hydrolysis of glutamine to glutamate and ammonia as part of the biosynthesis of pyridoxal 5'-phosphate. The resulting ammonia molecule is channeled to the active site of PdxS.</text>
</comment>
<comment type="catalytic activity">
    <reaction evidence="1">
        <text>aldehydo-D-ribose 5-phosphate + D-glyceraldehyde 3-phosphate + L-glutamine = pyridoxal 5'-phosphate + L-glutamate + phosphate + 3 H2O + H(+)</text>
        <dbReference type="Rhea" id="RHEA:31507"/>
        <dbReference type="ChEBI" id="CHEBI:15377"/>
        <dbReference type="ChEBI" id="CHEBI:15378"/>
        <dbReference type="ChEBI" id="CHEBI:29985"/>
        <dbReference type="ChEBI" id="CHEBI:43474"/>
        <dbReference type="ChEBI" id="CHEBI:58273"/>
        <dbReference type="ChEBI" id="CHEBI:58359"/>
        <dbReference type="ChEBI" id="CHEBI:59776"/>
        <dbReference type="ChEBI" id="CHEBI:597326"/>
        <dbReference type="EC" id="4.3.3.6"/>
    </reaction>
</comment>
<comment type="catalytic activity">
    <reaction evidence="1">
        <text>L-glutamine + H2O = L-glutamate + NH4(+)</text>
        <dbReference type="Rhea" id="RHEA:15889"/>
        <dbReference type="ChEBI" id="CHEBI:15377"/>
        <dbReference type="ChEBI" id="CHEBI:28938"/>
        <dbReference type="ChEBI" id="CHEBI:29985"/>
        <dbReference type="ChEBI" id="CHEBI:58359"/>
        <dbReference type="EC" id="3.5.1.2"/>
    </reaction>
</comment>
<comment type="pathway">
    <text evidence="1">Cofactor biosynthesis; pyridoxal 5'-phosphate biosynthesis.</text>
</comment>
<comment type="subunit">
    <text evidence="1">In the presence of PdxS, forms a dodecamer of heterodimers. Only shows activity in the heterodimer.</text>
</comment>
<comment type="similarity">
    <text evidence="2">Belongs to the glutaminase PdxT/SNO family.</text>
</comment>
<comment type="caution">
    <text evidence="2">Glu-170 and Asp-172 are present instead of the conserved His and Glu which are expected to be active site residues.</text>
</comment>
<keyword id="KW-0315">Glutamine amidotransferase</keyword>
<keyword id="KW-0378">Hydrolase</keyword>
<keyword id="KW-0456">Lyase</keyword>
<keyword id="KW-0663">Pyridoxal phosphate</keyword>
<keyword id="KW-1185">Reference proteome</keyword>
<gene>
    <name evidence="1" type="primary">pdxT</name>
    <name type="ordered locus">MAP_2708c</name>
</gene>
<accession>Q73WF2</accession>
<evidence type="ECO:0000250" key="1">
    <source>
        <dbReference type="UniProtKB" id="P37528"/>
    </source>
</evidence>
<evidence type="ECO:0000305" key="2"/>
<organism>
    <name type="scientific">Mycolicibacterium paratuberculosis (strain ATCC BAA-968 / K-10)</name>
    <name type="common">Mycobacterium paratuberculosis</name>
    <dbReference type="NCBI Taxonomy" id="262316"/>
    <lineage>
        <taxon>Bacteria</taxon>
        <taxon>Bacillati</taxon>
        <taxon>Actinomycetota</taxon>
        <taxon>Actinomycetes</taxon>
        <taxon>Mycobacteriales</taxon>
        <taxon>Mycobacteriaceae</taxon>
        <taxon>Mycobacterium</taxon>
        <taxon>Mycobacterium avium complex (MAC)</taxon>
    </lineage>
</organism>
<reference key="1">
    <citation type="journal article" date="2005" name="Proc. Natl. Acad. Sci. U.S.A.">
        <title>The complete genome sequence of Mycobacterium avium subspecies paratuberculosis.</title>
        <authorList>
            <person name="Li L."/>
            <person name="Bannantine J.P."/>
            <person name="Zhang Q."/>
            <person name="Amonsin A."/>
            <person name="May B.J."/>
            <person name="Alt D."/>
            <person name="Banerji N."/>
            <person name="Kanjilal S."/>
            <person name="Kapur V."/>
        </authorList>
    </citation>
    <scope>NUCLEOTIDE SEQUENCE [LARGE SCALE GENOMIC DNA]</scope>
    <source>
        <strain>ATCC BAA-968 / K-10</strain>
    </source>
</reference>
<dbReference type="EC" id="4.3.3.6" evidence="1"/>
<dbReference type="EC" id="3.5.1.2" evidence="1"/>
<dbReference type="EMBL" id="AE016958">
    <property type="protein sequence ID" value="AAS05025.1"/>
    <property type="molecule type" value="Genomic_DNA"/>
</dbReference>
<dbReference type="RefSeq" id="WP_003875362.1">
    <property type="nucleotide sequence ID" value="NZ_CP106873.1"/>
</dbReference>
<dbReference type="SMR" id="Q73WF2"/>
<dbReference type="STRING" id="262316.MAP_2708c"/>
<dbReference type="KEGG" id="mpa:MAP_2708c"/>
<dbReference type="eggNOG" id="COG0311">
    <property type="taxonomic scope" value="Bacteria"/>
</dbReference>
<dbReference type="HOGENOM" id="CLU_069674_2_0_11"/>
<dbReference type="UniPathway" id="UPA00245"/>
<dbReference type="Proteomes" id="UP000000580">
    <property type="component" value="Chromosome"/>
</dbReference>
<dbReference type="GO" id="GO:0005829">
    <property type="term" value="C:cytosol"/>
    <property type="evidence" value="ECO:0007669"/>
    <property type="project" value="TreeGrafter"/>
</dbReference>
<dbReference type="GO" id="GO:1903600">
    <property type="term" value="C:glutaminase complex"/>
    <property type="evidence" value="ECO:0007669"/>
    <property type="project" value="TreeGrafter"/>
</dbReference>
<dbReference type="GO" id="GO:0004359">
    <property type="term" value="F:glutaminase activity"/>
    <property type="evidence" value="ECO:0007669"/>
    <property type="project" value="UniProtKB-EC"/>
</dbReference>
<dbReference type="GO" id="GO:0036381">
    <property type="term" value="F:pyridoxal 5'-phosphate synthase (glutamine hydrolysing) activity"/>
    <property type="evidence" value="ECO:0007669"/>
    <property type="project" value="UniProtKB-EC"/>
</dbReference>
<dbReference type="GO" id="GO:0042823">
    <property type="term" value="P:pyridoxal phosphate biosynthetic process"/>
    <property type="evidence" value="ECO:0007669"/>
    <property type="project" value="UniProtKB-UniPathway"/>
</dbReference>
<dbReference type="GO" id="GO:0008614">
    <property type="term" value="P:pyridoxine metabolic process"/>
    <property type="evidence" value="ECO:0007669"/>
    <property type="project" value="TreeGrafter"/>
</dbReference>
<dbReference type="CDD" id="cd01749">
    <property type="entry name" value="GATase1_PB"/>
    <property type="match status" value="1"/>
</dbReference>
<dbReference type="FunFam" id="3.40.50.880:FF:000010">
    <property type="entry name" value="uncharacterized protein LOC100176842 isoform X2"/>
    <property type="match status" value="1"/>
</dbReference>
<dbReference type="Gene3D" id="3.40.50.880">
    <property type="match status" value="1"/>
</dbReference>
<dbReference type="InterPro" id="IPR029062">
    <property type="entry name" value="Class_I_gatase-like"/>
</dbReference>
<dbReference type="InterPro" id="IPR002161">
    <property type="entry name" value="PdxT/SNO"/>
</dbReference>
<dbReference type="InterPro" id="IPR021196">
    <property type="entry name" value="PdxT/SNO_CS"/>
</dbReference>
<dbReference type="NCBIfam" id="TIGR03800">
    <property type="entry name" value="PLP_synth_Pdx2"/>
    <property type="match status" value="1"/>
</dbReference>
<dbReference type="PANTHER" id="PTHR31559">
    <property type="entry name" value="PYRIDOXAL 5'-PHOSPHATE SYNTHASE SUBUNIT SNO"/>
    <property type="match status" value="1"/>
</dbReference>
<dbReference type="PANTHER" id="PTHR31559:SF0">
    <property type="entry name" value="PYRIDOXAL 5'-PHOSPHATE SYNTHASE SUBUNIT SNO1-RELATED"/>
    <property type="match status" value="1"/>
</dbReference>
<dbReference type="Pfam" id="PF01174">
    <property type="entry name" value="SNO"/>
    <property type="match status" value="1"/>
</dbReference>
<dbReference type="PIRSF" id="PIRSF005639">
    <property type="entry name" value="Glut_amidoT_SNO"/>
    <property type="match status" value="1"/>
</dbReference>
<dbReference type="SUPFAM" id="SSF52317">
    <property type="entry name" value="Class I glutamine amidotransferase-like"/>
    <property type="match status" value="1"/>
</dbReference>
<dbReference type="PROSITE" id="PS01236">
    <property type="entry name" value="PDXT_SNO_1"/>
    <property type="match status" value="1"/>
</dbReference>
<dbReference type="PROSITE" id="PS51130">
    <property type="entry name" value="PDXT_SNO_2"/>
    <property type="match status" value="1"/>
</dbReference>
<proteinExistence type="inferred from homology"/>
<protein>
    <recommendedName>
        <fullName evidence="1">Pyridoxal 5'-phosphate synthase subunit PdxT</fullName>
        <ecNumber evidence="1">4.3.3.6</ecNumber>
    </recommendedName>
    <alternativeName>
        <fullName evidence="1">Pdx2</fullName>
    </alternativeName>
    <alternativeName>
        <fullName evidence="1">Pyridoxal 5'-phosphate synthase glutaminase subunit</fullName>
        <ecNumber evidence="1">3.5.1.2</ecNumber>
    </alternativeName>
</protein>
<name>PDXT_MYCPA</name>
<sequence>MSAPRIGVLALQGDTREHLAALREAGAESMPVRRRGELEAVDGLVIPGGESTTMSHLLKDLDLLEPLRGLLADGLPAYGACAGMILLASEILDAGAGGREALPLRAIDMTVRRNAFGRQVDSFEGDIAFAGLDGPVRAVFIRAPWVERAGDGVEVLARAAGHVVAVAGIEPDA</sequence>
<feature type="chain" id="PRO_0000135648" description="Pyridoxal 5'-phosphate synthase subunit PdxT">
    <location>
        <begin position="1"/>
        <end position="173"/>
    </location>
</feature>
<feature type="active site" description="Nucleophile" evidence="1">
    <location>
        <position position="81"/>
    </location>
</feature>
<feature type="binding site" evidence="1">
    <location>
        <begin position="49"/>
        <end position="51"/>
    </location>
    <ligand>
        <name>L-glutamine</name>
        <dbReference type="ChEBI" id="CHEBI:58359"/>
    </ligand>
</feature>
<feature type="binding site" evidence="1">
    <location>
        <position position="113"/>
    </location>
    <ligand>
        <name>L-glutamine</name>
        <dbReference type="ChEBI" id="CHEBI:58359"/>
    </ligand>
</feature>
<feature type="binding site" evidence="1">
    <location>
        <begin position="141"/>
        <end position="142"/>
    </location>
    <ligand>
        <name>L-glutamine</name>
        <dbReference type="ChEBI" id="CHEBI:58359"/>
    </ligand>
</feature>